<keyword id="KW-0255">Endonuclease</keyword>
<keyword id="KW-0378">Hydrolase</keyword>
<keyword id="KW-0540">Nuclease</keyword>
<keyword id="KW-0694">RNA-binding</keyword>
<keyword id="KW-0819">tRNA processing</keyword>
<evidence type="ECO:0000255" key="1">
    <source>
        <dbReference type="HAMAP-Rule" id="MF_00227"/>
    </source>
</evidence>
<accession>Q87TR4</accession>
<sequence>MNTYAFNRELRLLTPEHYQNVFQQAHRAGSPHFTIIARNNKLSHPRLGLAVPKKQIKTAVGRNRFKRLARESFRNSQHQLPNKDFVVIAKKSAQDLSNEEIFKLFDKLWQRLSRPSRG</sequence>
<gene>
    <name evidence="1" type="primary">rnpA</name>
    <name type="ordered locus">VP0004</name>
</gene>
<protein>
    <recommendedName>
        <fullName evidence="1">Ribonuclease P protein component</fullName>
        <shortName evidence="1">RNase P protein</shortName>
        <shortName evidence="1">RNaseP protein</shortName>
        <ecNumber evidence="1">3.1.26.5</ecNumber>
    </recommendedName>
    <alternativeName>
        <fullName evidence="1">Protein C5</fullName>
    </alternativeName>
</protein>
<dbReference type="EC" id="3.1.26.5" evidence="1"/>
<dbReference type="EMBL" id="BA000031">
    <property type="protein sequence ID" value="BAC58267.1"/>
    <property type="molecule type" value="Genomic_DNA"/>
</dbReference>
<dbReference type="RefSeq" id="NP_796383.1">
    <property type="nucleotide sequence ID" value="NC_004603.1"/>
</dbReference>
<dbReference type="SMR" id="Q87TR4"/>
<dbReference type="KEGG" id="vpa:VP0004"/>
<dbReference type="PATRIC" id="fig|223926.6.peg.5"/>
<dbReference type="eggNOG" id="COG0594">
    <property type="taxonomic scope" value="Bacteria"/>
</dbReference>
<dbReference type="HOGENOM" id="CLU_117179_11_0_6"/>
<dbReference type="Proteomes" id="UP000002493">
    <property type="component" value="Chromosome 1"/>
</dbReference>
<dbReference type="GO" id="GO:0030677">
    <property type="term" value="C:ribonuclease P complex"/>
    <property type="evidence" value="ECO:0007669"/>
    <property type="project" value="TreeGrafter"/>
</dbReference>
<dbReference type="GO" id="GO:0042781">
    <property type="term" value="F:3'-tRNA processing endoribonuclease activity"/>
    <property type="evidence" value="ECO:0007669"/>
    <property type="project" value="TreeGrafter"/>
</dbReference>
<dbReference type="GO" id="GO:0004526">
    <property type="term" value="F:ribonuclease P activity"/>
    <property type="evidence" value="ECO:0007669"/>
    <property type="project" value="UniProtKB-UniRule"/>
</dbReference>
<dbReference type="GO" id="GO:0000049">
    <property type="term" value="F:tRNA binding"/>
    <property type="evidence" value="ECO:0007669"/>
    <property type="project" value="UniProtKB-UniRule"/>
</dbReference>
<dbReference type="GO" id="GO:0001682">
    <property type="term" value="P:tRNA 5'-leader removal"/>
    <property type="evidence" value="ECO:0007669"/>
    <property type="project" value="UniProtKB-UniRule"/>
</dbReference>
<dbReference type="Gene3D" id="3.30.230.10">
    <property type="match status" value="1"/>
</dbReference>
<dbReference type="HAMAP" id="MF_00227">
    <property type="entry name" value="RNase_P"/>
    <property type="match status" value="1"/>
</dbReference>
<dbReference type="InterPro" id="IPR020568">
    <property type="entry name" value="Ribosomal_Su5_D2-typ_SF"/>
</dbReference>
<dbReference type="InterPro" id="IPR014721">
    <property type="entry name" value="Ribsml_uS5_D2-typ_fold_subgr"/>
</dbReference>
<dbReference type="InterPro" id="IPR000100">
    <property type="entry name" value="RNase_P"/>
</dbReference>
<dbReference type="InterPro" id="IPR020539">
    <property type="entry name" value="RNase_P_CS"/>
</dbReference>
<dbReference type="NCBIfam" id="TIGR00188">
    <property type="entry name" value="rnpA"/>
    <property type="match status" value="1"/>
</dbReference>
<dbReference type="PANTHER" id="PTHR33992">
    <property type="entry name" value="RIBONUCLEASE P PROTEIN COMPONENT"/>
    <property type="match status" value="1"/>
</dbReference>
<dbReference type="PANTHER" id="PTHR33992:SF1">
    <property type="entry name" value="RIBONUCLEASE P PROTEIN COMPONENT"/>
    <property type="match status" value="1"/>
</dbReference>
<dbReference type="Pfam" id="PF00825">
    <property type="entry name" value="Ribonuclease_P"/>
    <property type="match status" value="1"/>
</dbReference>
<dbReference type="SUPFAM" id="SSF54211">
    <property type="entry name" value="Ribosomal protein S5 domain 2-like"/>
    <property type="match status" value="1"/>
</dbReference>
<dbReference type="PROSITE" id="PS00648">
    <property type="entry name" value="RIBONUCLEASE_P"/>
    <property type="match status" value="1"/>
</dbReference>
<organism>
    <name type="scientific">Vibrio parahaemolyticus serotype O3:K6 (strain RIMD 2210633)</name>
    <dbReference type="NCBI Taxonomy" id="223926"/>
    <lineage>
        <taxon>Bacteria</taxon>
        <taxon>Pseudomonadati</taxon>
        <taxon>Pseudomonadota</taxon>
        <taxon>Gammaproteobacteria</taxon>
        <taxon>Vibrionales</taxon>
        <taxon>Vibrionaceae</taxon>
        <taxon>Vibrio</taxon>
    </lineage>
</organism>
<reference key="1">
    <citation type="journal article" date="2003" name="Lancet">
        <title>Genome sequence of Vibrio parahaemolyticus: a pathogenic mechanism distinct from that of V. cholerae.</title>
        <authorList>
            <person name="Makino K."/>
            <person name="Oshima K."/>
            <person name="Kurokawa K."/>
            <person name="Yokoyama K."/>
            <person name="Uda T."/>
            <person name="Tagomori K."/>
            <person name="Iijima Y."/>
            <person name="Najima M."/>
            <person name="Nakano M."/>
            <person name="Yamashita A."/>
            <person name="Kubota Y."/>
            <person name="Kimura S."/>
            <person name="Yasunaga T."/>
            <person name="Honda T."/>
            <person name="Shinagawa H."/>
            <person name="Hattori M."/>
            <person name="Iida T."/>
        </authorList>
    </citation>
    <scope>NUCLEOTIDE SEQUENCE [LARGE SCALE GENOMIC DNA]</scope>
    <source>
        <strain>RIMD 2210633</strain>
    </source>
</reference>
<proteinExistence type="inferred from homology"/>
<comment type="function">
    <text evidence="1">RNaseP catalyzes the removal of the 5'-leader sequence from pre-tRNA to produce the mature 5'-terminus. It can also cleave other RNA substrates such as 4.5S RNA. The protein component plays an auxiliary but essential role in vivo by binding to the 5'-leader sequence and broadening the substrate specificity of the ribozyme.</text>
</comment>
<comment type="catalytic activity">
    <reaction evidence="1">
        <text>Endonucleolytic cleavage of RNA, removing 5'-extranucleotides from tRNA precursor.</text>
        <dbReference type="EC" id="3.1.26.5"/>
    </reaction>
</comment>
<comment type="subunit">
    <text evidence="1">Consists of a catalytic RNA component (M1 or rnpB) and a protein subunit.</text>
</comment>
<comment type="similarity">
    <text evidence="1">Belongs to the RnpA family.</text>
</comment>
<feature type="chain" id="PRO_0000198564" description="Ribonuclease P protein component">
    <location>
        <begin position="1"/>
        <end position="118"/>
    </location>
</feature>
<name>RNPA_VIBPA</name>